<organism>
    <name type="scientific">Arabidopsis thaliana</name>
    <name type="common">Mouse-ear cress</name>
    <dbReference type="NCBI Taxonomy" id="3702"/>
    <lineage>
        <taxon>Eukaryota</taxon>
        <taxon>Viridiplantae</taxon>
        <taxon>Streptophyta</taxon>
        <taxon>Embryophyta</taxon>
        <taxon>Tracheophyta</taxon>
        <taxon>Spermatophyta</taxon>
        <taxon>Magnoliopsida</taxon>
        <taxon>eudicotyledons</taxon>
        <taxon>Gunneridae</taxon>
        <taxon>Pentapetalae</taxon>
        <taxon>rosids</taxon>
        <taxon>malvids</taxon>
        <taxon>Brassicales</taxon>
        <taxon>Brassicaceae</taxon>
        <taxon>Camelineae</taxon>
        <taxon>Arabidopsis</taxon>
    </lineage>
</organism>
<keyword id="KW-0150">Chloroplast</keyword>
<keyword id="KW-0472">Membrane</keyword>
<keyword id="KW-0934">Plastid</keyword>
<keyword id="KW-1185">Reference proteome</keyword>
<keyword id="KW-0793">Thylakoid</keyword>
<keyword id="KW-0809">Transit peptide</keyword>
<keyword id="KW-0812">Transmembrane</keyword>
<keyword id="KW-1133">Transmembrane helix</keyword>
<feature type="transit peptide" description="Chloroplast" evidence="1">
    <location>
        <begin position="1"/>
        <end position="16"/>
    </location>
</feature>
<feature type="chain" id="PRO_0000433266" description="YlmG homolog protein 1-1, chloroplastic" evidence="1">
    <location>
        <begin position="17"/>
        <end position="232"/>
    </location>
</feature>
<feature type="transmembrane region" description="Helical" evidence="1">
    <location>
        <begin position="147"/>
        <end position="167"/>
    </location>
</feature>
<feature type="transmembrane region" description="Helical" evidence="1">
    <location>
        <begin position="201"/>
        <end position="221"/>
    </location>
</feature>
<feature type="sequence conflict" description="In Ref. 4; AAM66973." evidence="4" ref="4">
    <original>YLPSSA</original>
    <variation>FLLPPSSV</variation>
    <location>
        <begin position="14"/>
        <end position="19"/>
    </location>
</feature>
<gene>
    <name evidence="3" type="primary">YLMG1-1</name>
    <name evidence="4" type="synonym">YGGT-C</name>
    <name evidence="5" type="ordered locus">At3g07430</name>
    <name evidence="6" type="ORF">F21O3.14</name>
</gene>
<protein>
    <recommendedName>
        <fullName evidence="4">YlmG homolog protein 1-1, chloroplastic</fullName>
        <shortName evidence="3">AtYLMG1-1</shortName>
    </recommendedName>
    <alternativeName>
        <fullName evidence="4">YGGT family protein YLMG1-1</fullName>
    </alternativeName>
</protein>
<name>YMG11_ARATH</name>
<sequence length="232" mass="24922">MAAITALTLRSPVYLPSSATSPRFHGFTNQPPPARLFFPLNPFPSLSIQNPKSIRISASASPITTPILQTEKSTARSSTLTGSTRSLATLAALAIAVTRVLAQKLSLAIQTSSPVIADGLRFSLSTAGPVFFASLRDRPPGYLNTPLTVVAVGIKKWLDIYSGVLMVRVLLSWFPNIPWERQPLSAIRDLCDPYLNLFRNIIPPIFDTLDVSPLLAFAVLGTLGSIVHGSTG</sequence>
<proteinExistence type="evidence at transcript level"/>
<accession>Q9SRS3</accession>
<accession>Q8L939</accession>
<dbReference type="EMBL" id="AC009853">
    <property type="protein sequence ID" value="AAF02150.1"/>
    <property type="molecule type" value="Genomic_DNA"/>
</dbReference>
<dbReference type="EMBL" id="CP002686">
    <property type="protein sequence ID" value="AEE74542.1"/>
    <property type="molecule type" value="Genomic_DNA"/>
</dbReference>
<dbReference type="EMBL" id="AY099847">
    <property type="protein sequence ID" value="AAM20698.1"/>
    <property type="molecule type" value="mRNA"/>
</dbReference>
<dbReference type="EMBL" id="BT006263">
    <property type="protein sequence ID" value="AAP13371.1"/>
    <property type="molecule type" value="mRNA"/>
</dbReference>
<dbReference type="EMBL" id="AY088651">
    <property type="protein sequence ID" value="AAM66973.1"/>
    <property type="molecule type" value="mRNA"/>
</dbReference>
<dbReference type="RefSeq" id="NP_566307.1">
    <property type="nucleotide sequence ID" value="NM_111622.3"/>
</dbReference>
<dbReference type="SMR" id="Q9SRS3"/>
<dbReference type="FunCoup" id="Q9SRS3">
    <property type="interactions" value="225"/>
</dbReference>
<dbReference type="STRING" id="3702.Q9SRS3"/>
<dbReference type="PaxDb" id="3702-AT3G07430.1"/>
<dbReference type="ProteomicsDB" id="242341"/>
<dbReference type="DNASU" id="819931"/>
<dbReference type="EnsemblPlants" id="AT3G07430.1">
    <property type="protein sequence ID" value="AT3G07430.1"/>
    <property type="gene ID" value="AT3G07430"/>
</dbReference>
<dbReference type="GeneID" id="819931"/>
<dbReference type="Gramene" id="AT3G07430.1">
    <property type="protein sequence ID" value="AT3G07430.1"/>
    <property type="gene ID" value="AT3G07430"/>
</dbReference>
<dbReference type="KEGG" id="ath:AT3G07430"/>
<dbReference type="Araport" id="AT3G07430"/>
<dbReference type="TAIR" id="AT3G07430">
    <property type="gene designation" value="YLMG1-1"/>
</dbReference>
<dbReference type="eggNOG" id="ENOG502RXHG">
    <property type="taxonomic scope" value="Eukaryota"/>
</dbReference>
<dbReference type="HOGENOM" id="CLU_092220_1_0_1"/>
<dbReference type="InParanoid" id="Q9SRS3"/>
<dbReference type="OMA" id="SHAILFQ"/>
<dbReference type="PhylomeDB" id="Q9SRS3"/>
<dbReference type="PRO" id="PR:Q9SRS3"/>
<dbReference type="Proteomes" id="UP000006548">
    <property type="component" value="Chromosome 3"/>
</dbReference>
<dbReference type="ExpressionAtlas" id="Q9SRS3">
    <property type="expression patterns" value="baseline and differential"/>
</dbReference>
<dbReference type="GO" id="GO:0009507">
    <property type="term" value="C:chloroplast"/>
    <property type="evidence" value="ECO:0007005"/>
    <property type="project" value="TAIR"/>
</dbReference>
<dbReference type="GO" id="GO:0009941">
    <property type="term" value="C:chloroplast envelope"/>
    <property type="evidence" value="ECO:0007005"/>
    <property type="project" value="TAIR"/>
</dbReference>
<dbReference type="GO" id="GO:0009535">
    <property type="term" value="C:chloroplast thylakoid membrane"/>
    <property type="evidence" value="ECO:0007669"/>
    <property type="project" value="UniProtKB-SubCell"/>
</dbReference>
<dbReference type="GO" id="GO:0005829">
    <property type="term" value="C:cytosol"/>
    <property type="evidence" value="ECO:0007005"/>
    <property type="project" value="TAIR"/>
</dbReference>
<dbReference type="GO" id="GO:0042651">
    <property type="term" value="C:thylakoid membrane"/>
    <property type="evidence" value="ECO:0000314"/>
    <property type="project" value="TAIR"/>
</dbReference>
<dbReference type="GO" id="GO:0010020">
    <property type="term" value="P:chloroplast fission"/>
    <property type="evidence" value="ECO:0000315"/>
    <property type="project" value="TAIR"/>
</dbReference>
<dbReference type="GO" id="GO:0090143">
    <property type="term" value="P:nucleoid organization"/>
    <property type="evidence" value="ECO:0000315"/>
    <property type="project" value="TAIR"/>
</dbReference>
<dbReference type="InterPro" id="IPR003425">
    <property type="entry name" value="CCB3/YggT"/>
</dbReference>
<dbReference type="PANTHER" id="PTHR33219:SF12">
    <property type="entry name" value="YLMG HOMOLOG PROTEIN 1-1, CHLOROPLASTIC"/>
    <property type="match status" value="1"/>
</dbReference>
<dbReference type="PANTHER" id="PTHR33219">
    <property type="entry name" value="YLMG HOMOLOG PROTEIN 2, CHLOROPLASTIC"/>
    <property type="match status" value="1"/>
</dbReference>
<dbReference type="Pfam" id="PF02325">
    <property type="entry name" value="YGGT"/>
    <property type="match status" value="1"/>
</dbReference>
<evidence type="ECO:0000255" key="1"/>
<evidence type="ECO:0000269" key="2">
    <source>
    </source>
</evidence>
<evidence type="ECO:0000303" key="3">
    <source>
    </source>
</evidence>
<evidence type="ECO:0000305" key="4"/>
<evidence type="ECO:0000312" key="5">
    <source>
        <dbReference type="Araport" id="AT3G07430"/>
    </source>
</evidence>
<evidence type="ECO:0000312" key="6">
    <source>
        <dbReference type="EMBL" id="AAF02150.1"/>
    </source>
</evidence>
<comment type="function">
    <text evidence="2">Required for the proper distribution of nucleoids in chloroplasts. The nucleoid partitioning by YLMG1-1 may be related to chloroplast division processes.</text>
</comment>
<comment type="subcellular location">
    <subcellularLocation>
        <location evidence="2">Plastid</location>
        <location evidence="2">Chloroplast thylakoid membrane</location>
        <topology evidence="1">Multi-pass membrane protein</topology>
    </subcellularLocation>
    <text evidence="2">Localizes in punctate structures on the thylakoid membranes which are adjacent to a subset of nucleoids.</text>
</comment>
<comment type="miscellaneous">
    <text evidence="2">Plant over-expressing YLMG1-1 have impaired chloroplast division leading to reduced number and enlarged chloroplasts in mesophyll cells. Plants silencing YLMG1-1 show a pale green phenotype in young emerging leaves and the basal part of expanding leaves.</text>
</comment>
<comment type="similarity">
    <text evidence="4">Belongs to the YggT family.</text>
</comment>
<reference key="1">
    <citation type="journal article" date="2000" name="Nature">
        <title>Sequence and analysis of chromosome 3 of the plant Arabidopsis thaliana.</title>
        <authorList>
            <person name="Salanoubat M."/>
            <person name="Lemcke K."/>
            <person name="Rieger M."/>
            <person name="Ansorge W."/>
            <person name="Unseld M."/>
            <person name="Fartmann B."/>
            <person name="Valle G."/>
            <person name="Bloecker H."/>
            <person name="Perez-Alonso M."/>
            <person name="Obermaier B."/>
            <person name="Delseny M."/>
            <person name="Boutry M."/>
            <person name="Grivell L.A."/>
            <person name="Mache R."/>
            <person name="Puigdomenech P."/>
            <person name="De Simone V."/>
            <person name="Choisne N."/>
            <person name="Artiguenave F."/>
            <person name="Robert C."/>
            <person name="Brottier P."/>
            <person name="Wincker P."/>
            <person name="Cattolico L."/>
            <person name="Weissenbach J."/>
            <person name="Saurin W."/>
            <person name="Quetier F."/>
            <person name="Schaefer M."/>
            <person name="Mueller-Auer S."/>
            <person name="Gabel C."/>
            <person name="Fuchs M."/>
            <person name="Benes V."/>
            <person name="Wurmbach E."/>
            <person name="Drzonek H."/>
            <person name="Erfle H."/>
            <person name="Jordan N."/>
            <person name="Bangert S."/>
            <person name="Wiedelmann R."/>
            <person name="Kranz H."/>
            <person name="Voss H."/>
            <person name="Holland R."/>
            <person name="Brandt P."/>
            <person name="Nyakatura G."/>
            <person name="Vezzi A."/>
            <person name="D'Angelo M."/>
            <person name="Pallavicini A."/>
            <person name="Toppo S."/>
            <person name="Simionati B."/>
            <person name="Conrad A."/>
            <person name="Hornischer K."/>
            <person name="Kauer G."/>
            <person name="Loehnert T.-H."/>
            <person name="Nordsiek G."/>
            <person name="Reichelt J."/>
            <person name="Scharfe M."/>
            <person name="Schoen O."/>
            <person name="Bargues M."/>
            <person name="Terol J."/>
            <person name="Climent J."/>
            <person name="Navarro P."/>
            <person name="Collado C."/>
            <person name="Perez-Perez A."/>
            <person name="Ottenwaelder B."/>
            <person name="Duchemin D."/>
            <person name="Cooke R."/>
            <person name="Laudie M."/>
            <person name="Berger-Llauro C."/>
            <person name="Purnelle B."/>
            <person name="Masuy D."/>
            <person name="de Haan M."/>
            <person name="Maarse A.C."/>
            <person name="Alcaraz J.-P."/>
            <person name="Cottet A."/>
            <person name="Casacuberta E."/>
            <person name="Monfort A."/>
            <person name="Argiriou A."/>
            <person name="Flores M."/>
            <person name="Liguori R."/>
            <person name="Vitale D."/>
            <person name="Mannhaupt G."/>
            <person name="Haase D."/>
            <person name="Schoof H."/>
            <person name="Rudd S."/>
            <person name="Zaccaria P."/>
            <person name="Mewes H.-W."/>
            <person name="Mayer K.F.X."/>
            <person name="Kaul S."/>
            <person name="Town C.D."/>
            <person name="Koo H.L."/>
            <person name="Tallon L.J."/>
            <person name="Jenkins J."/>
            <person name="Rooney T."/>
            <person name="Rizzo M."/>
            <person name="Walts A."/>
            <person name="Utterback T."/>
            <person name="Fujii C.Y."/>
            <person name="Shea T.P."/>
            <person name="Creasy T.H."/>
            <person name="Haas B."/>
            <person name="Maiti R."/>
            <person name="Wu D."/>
            <person name="Peterson J."/>
            <person name="Van Aken S."/>
            <person name="Pai G."/>
            <person name="Militscher J."/>
            <person name="Sellers P."/>
            <person name="Gill J.E."/>
            <person name="Feldblyum T.V."/>
            <person name="Preuss D."/>
            <person name="Lin X."/>
            <person name="Nierman W.C."/>
            <person name="Salzberg S.L."/>
            <person name="White O."/>
            <person name="Venter J.C."/>
            <person name="Fraser C.M."/>
            <person name="Kaneko T."/>
            <person name="Nakamura Y."/>
            <person name="Sato S."/>
            <person name="Kato T."/>
            <person name="Asamizu E."/>
            <person name="Sasamoto S."/>
            <person name="Kimura T."/>
            <person name="Idesawa K."/>
            <person name="Kawashima K."/>
            <person name="Kishida Y."/>
            <person name="Kiyokawa C."/>
            <person name="Kohara M."/>
            <person name="Matsumoto M."/>
            <person name="Matsuno A."/>
            <person name="Muraki A."/>
            <person name="Nakayama S."/>
            <person name="Nakazaki N."/>
            <person name="Shinpo S."/>
            <person name="Takeuchi C."/>
            <person name="Wada T."/>
            <person name="Watanabe A."/>
            <person name="Yamada M."/>
            <person name="Yasuda M."/>
            <person name="Tabata S."/>
        </authorList>
    </citation>
    <scope>NUCLEOTIDE SEQUENCE [LARGE SCALE GENOMIC DNA]</scope>
    <source>
        <strain>cv. Columbia</strain>
    </source>
</reference>
<reference key="2">
    <citation type="journal article" date="2017" name="Plant J.">
        <title>Araport11: a complete reannotation of the Arabidopsis thaliana reference genome.</title>
        <authorList>
            <person name="Cheng C.Y."/>
            <person name="Krishnakumar V."/>
            <person name="Chan A.P."/>
            <person name="Thibaud-Nissen F."/>
            <person name="Schobel S."/>
            <person name="Town C.D."/>
        </authorList>
    </citation>
    <scope>GENOME REANNOTATION</scope>
    <source>
        <strain>cv. Columbia</strain>
    </source>
</reference>
<reference key="3">
    <citation type="journal article" date="2003" name="Science">
        <title>Empirical analysis of transcriptional activity in the Arabidopsis genome.</title>
        <authorList>
            <person name="Yamada K."/>
            <person name="Lim J."/>
            <person name="Dale J.M."/>
            <person name="Chen H."/>
            <person name="Shinn P."/>
            <person name="Palm C.J."/>
            <person name="Southwick A.M."/>
            <person name="Wu H.C."/>
            <person name="Kim C.J."/>
            <person name="Nguyen M."/>
            <person name="Pham P.K."/>
            <person name="Cheuk R.F."/>
            <person name="Karlin-Newmann G."/>
            <person name="Liu S.X."/>
            <person name="Lam B."/>
            <person name="Sakano H."/>
            <person name="Wu T."/>
            <person name="Yu G."/>
            <person name="Miranda M."/>
            <person name="Quach H.L."/>
            <person name="Tripp M."/>
            <person name="Chang C.H."/>
            <person name="Lee J.M."/>
            <person name="Toriumi M.J."/>
            <person name="Chan M.M."/>
            <person name="Tang C.C."/>
            <person name="Onodera C.S."/>
            <person name="Deng J.M."/>
            <person name="Akiyama K."/>
            <person name="Ansari Y."/>
            <person name="Arakawa T."/>
            <person name="Banh J."/>
            <person name="Banno F."/>
            <person name="Bowser L."/>
            <person name="Brooks S.Y."/>
            <person name="Carninci P."/>
            <person name="Chao Q."/>
            <person name="Choy N."/>
            <person name="Enju A."/>
            <person name="Goldsmith A.D."/>
            <person name="Gurjal M."/>
            <person name="Hansen N.F."/>
            <person name="Hayashizaki Y."/>
            <person name="Johnson-Hopson C."/>
            <person name="Hsuan V.W."/>
            <person name="Iida K."/>
            <person name="Karnes M."/>
            <person name="Khan S."/>
            <person name="Koesema E."/>
            <person name="Ishida J."/>
            <person name="Jiang P.X."/>
            <person name="Jones T."/>
            <person name="Kawai J."/>
            <person name="Kamiya A."/>
            <person name="Meyers C."/>
            <person name="Nakajima M."/>
            <person name="Narusaka M."/>
            <person name="Seki M."/>
            <person name="Sakurai T."/>
            <person name="Satou M."/>
            <person name="Tamse R."/>
            <person name="Vaysberg M."/>
            <person name="Wallender E.K."/>
            <person name="Wong C."/>
            <person name="Yamamura Y."/>
            <person name="Yuan S."/>
            <person name="Shinozaki K."/>
            <person name="Davis R.W."/>
            <person name="Theologis A."/>
            <person name="Ecker J.R."/>
        </authorList>
    </citation>
    <scope>NUCLEOTIDE SEQUENCE [LARGE SCALE MRNA]</scope>
    <source>
        <strain>cv. Columbia</strain>
    </source>
</reference>
<reference key="4">
    <citation type="submission" date="2002-03" db="EMBL/GenBank/DDBJ databases">
        <title>Full-length cDNA from Arabidopsis thaliana.</title>
        <authorList>
            <person name="Brover V.V."/>
            <person name="Troukhan M.E."/>
            <person name="Alexandrov N.A."/>
            <person name="Lu Y.-P."/>
            <person name="Flavell R.B."/>
            <person name="Feldmann K.A."/>
        </authorList>
    </citation>
    <scope>NUCLEOTIDE SEQUENCE [LARGE SCALE MRNA]</scope>
</reference>
<reference key="5">
    <citation type="journal article" date="2010" name="BMC Plant Biol.">
        <title>The YlmG protein has a conserved function related to the distribution of nucleoids in chloroplasts and cyanobacteria.</title>
        <authorList>
            <person name="Kabeya Y."/>
            <person name="Nakanishi H."/>
            <person name="Suzuki K."/>
            <person name="Ichikawa T."/>
            <person name="Kondou Y."/>
            <person name="Matsui M."/>
            <person name="Miyagishima S.Y."/>
        </authorList>
    </citation>
    <scope>FUNCTION</scope>
    <scope>SUBCELLULAR LOCATION</scope>
</reference>